<name>ATPE_PARMW</name>
<keyword id="KW-0066">ATP synthesis</keyword>
<keyword id="KW-0139">CF(1)</keyword>
<keyword id="KW-0375">Hydrogen ion transport</keyword>
<keyword id="KW-0406">Ion transport</keyword>
<keyword id="KW-0472">Membrane</keyword>
<keyword id="KW-0793">Thylakoid</keyword>
<keyword id="KW-0813">Transport</keyword>
<dbReference type="EMBL" id="BX569690">
    <property type="protein sequence ID" value="CAE07026.1"/>
    <property type="molecule type" value="Genomic_DNA"/>
</dbReference>
<dbReference type="RefSeq" id="WP_011127382.1">
    <property type="nucleotide sequence ID" value="NC_005070.1"/>
</dbReference>
<dbReference type="SMR" id="Q7U8U8"/>
<dbReference type="STRING" id="84588.SYNW0511"/>
<dbReference type="KEGG" id="syw:SYNW0511"/>
<dbReference type="eggNOG" id="COG0355">
    <property type="taxonomic scope" value="Bacteria"/>
</dbReference>
<dbReference type="HOGENOM" id="CLU_084338_1_2_3"/>
<dbReference type="Proteomes" id="UP000001422">
    <property type="component" value="Chromosome"/>
</dbReference>
<dbReference type="GO" id="GO:0031676">
    <property type="term" value="C:plasma membrane-derived thylakoid membrane"/>
    <property type="evidence" value="ECO:0007669"/>
    <property type="project" value="UniProtKB-SubCell"/>
</dbReference>
<dbReference type="GO" id="GO:0045259">
    <property type="term" value="C:proton-transporting ATP synthase complex"/>
    <property type="evidence" value="ECO:0007669"/>
    <property type="project" value="UniProtKB-KW"/>
</dbReference>
<dbReference type="GO" id="GO:0005524">
    <property type="term" value="F:ATP binding"/>
    <property type="evidence" value="ECO:0007669"/>
    <property type="project" value="UniProtKB-UniRule"/>
</dbReference>
<dbReference type="GO" id="GO:0046933">
    <property type="term" value="F:proton-transporting ATP synthase activity, rotational mechanism"/>
    <property type="evidence" value="ECO:0007669"/>
    <property type="project" value="UniProtKB-UniRule"/>
</dbReference>
<dbReference type="CDD" id="cd12152">
    <property type="entry name" value="F1-ATPase_delta"/>
    <property type="match status" value="1"/>
</dbReference>
<dbReference type="Gene3D" id="2.60.15.10">
    <property type="entry name" value="F0F1 ATP synthase delta/epsilon subunit, N-terminal"/>
    <property type="match status" value="1"/>
</dbReference>
<dbReference type="Gene3D" id="1.10.287.540">
    <property type="entry name" value="Helix hairpin bin"/>
    <property type="match status" value="1"/>
</dbReference>
<dbReference type="HAMAP" id="MF_00530">
    <property type="entry name" value="ATP_synth_epsil_bac"/>
    <property type="match status" value="1"/>
</dbReference>
<dbReference type="InterPro" id="IPR001469">
    <property type="entry name" value="ATP_synth_F1_dsu/esu"/>
</dbReference>
<dbReference type="InterPro" id="IPR020546">
    <property type="entry name" value="ATP_synth_F1_dsu/esu_N"/>
</dbReference>
<dbReference type="InterPro" id="IPR036771">
    <property type="entry name" value="ATPsynth_dsu/esu_N"/>
</dbReference>
<dbReference type="NCBIfam" id="TIGR01216">
    <property type="entry name" value="ATP_synt_epsi"/>
    <property type="match status" value="1"/>
</dbReference>
<dbReference type="PANTHER" id="PTHR13822">
    <property type="entry name" value="ATP SYNTHASE DELTA/EPSILON CHAIN"/>
    <property type="match status" value="1"/>
</dbReference>
<dbReference type="PANTHER" id="PTHR13822:SF10">
    <property type="entry name" value="ATP SYNTHASE EPSILON CHAIN, CHLOROPLASTIC"/>
    <property type="match status" value="1"/>
</dbReference>
<dbReference type="Pfam" id="PF02823">
    <property type="entry name" value="ATP-synt_DE_N"/>
    <property type="match status" value="1"/>
</dbReference>
<dbReference type="SUPFAM" id="SSF51344">
    <property type="entry name" value="Epsilon subunit of F1F0-ATP synthase N-terminal domain"/>
    <property type="match status" value="1"/>
</dbReference>
<comment type="function">
    <text evidence="1">Produces ATP from ADP in the presence of a proton gradient across the membrane.</text>
</comment>
<comment type="subunit">
    <text>F-type ATPases have 2 components, CF(1) - the catalytic core - and CF(0) - the membrane proton channel. CF(1) has five subunits: alpha(3), beta(3), gamma(1), delta(1), epsilon(1). CF(0) has three main subunits: a, b and c.</text>
</comment>
<comment type="subcellular location">
    <subcellularLocation>
        <location evidence="1">Cellular thylakoid membrane</location>
        <topology evidence="1">Peripheral membrane protein</topology>
    </subcellularLocation>
</comment>
<comment type="similarity">
    <text evidence="1">Belongs to the ATPase epsilon chain family.</text>
</comment>
<feature type="chain" id="PRO_0000188229" description="ATP synthase epsilon chain">
    <location>
        <begin position="1"/>
        <end position="136"/>
    </location>
</feature>
<protein>
    <recommendedName>
        <fullName evidence="1">ATP synthase epsilon chain</fullName>
    </recommendedName>
    <alternativeName>
        <fullName evidence="1">ATP synthase F1 sector epsilon subunit</fullName>
    </alternativeName>
    <alternativeName>
        <fullName evidence="1">F-ATPase epsilon subunit</fullName>
    </alternativeName>
</protein>
<reference key="1">
    <citation type="journal article" date="2003" name="Nature">
        <title>The genome of a motile marine Synechococcus.</title>
        <authorList>
            <person name="Palenik B."/>
            <person name="Brahamsha B."/>
            <person name="Larimer F.W."/>
            <person name="Land M.L."/>
            <person name="Hauser L."/>
            <person name="Chain P."/>
            <person name="Lamerdin J.E."/>
            <person name="Regala W."/>
            <person name="Allen E.E."/>
            <person name="McCarren J."/>
            <person name="Paulsen I.T."/>
            <person name="Dufresne A."/>
            <person name="Partensky F."/>
            <person name="Webb E.A."/>
            <person name="Waterbury J."/>
        </authorList>
    </citation>
    <scope>NUCLEOTIDE SEQUENCE [LARGE SCALE GENOMIC DNA]</scope>
    <source>
        <strain>WH8102</strain>
    </source>
</reference>
<organism>
    <name type="scientific">Parasynechococcus marenigrum (strain WH8102)</name>
    <dbReference type="NCBI Taxonomy" id="84588"/>
    <lineage>
        <taxon>Bacteria</taxon>
        <taxon>Bacillati</taxon>
        <taxon>Cyanobacteriota</taxon>
        <taxon>Cyanophyceae</taxon>
        <taxon>Synechococcales</taxon>
        <taxon>Prochlorococcaceae</taxon>
        <taxon>Parasynechococcus</taxon>
        <taxon>Parasynechococcus marenigrum</taxon>
    </lineage>
</organism>
<gene>
    <name evidence="1" type="primary">atpC</name>
    <name type="synonym">atpE</name>
    <name type="ordered locus">SYNW0511</name>
</gene>
<sequence>MSLTLRVLAPDQNVFDGSADEVILPSTTGQLGILPGHISLLTAIDVGVLRVRANGGWNSIALMGGFAEVDADEVTVLVNQAELGSTIDGNTAEADFQKATTVVDGLEGQPASPEKVKAQQQLNMARARMQASKSAD</sequence>
<accession>Q7U8U8</accession>
<evidence type="ECO:0000255" key="1">
    <source>
        <dbReference type="HAMAP-Rule" id="MF_00530"/>
    </source>
</evidence>
<proteinExistence type="inferred from homology"/>